<feature type="signal peptide" evidence="1">
    <location>
        <begin position="1"/>
        <end position="22"/>
    </location>
</feature>
<feature type="chain" id="PRO_0000013986" description="Collagen alpha-1(XX) chain">
    <location>
        <begin position="23"/>
        <end position="1284"/>
    </location>
</feature>
<feature type="domain" description="Fibronectin type-III 1" evidence="3">
    <location>
        <begin position="28"/>
        <end position="119"/>
    </location>
</feature>
<feature type="domain" description="VWFA" evidence="2">
    <location>
        <begin position="179"/>
        <end position="354"/>
    </location>
</feature>
<feature type="domain" description="Fibronectin type-III 2" evidence="3">
    <location>
        <begin position="379"/>
        <end position="468"/>
    </location>
</feature>
<feature type="domain" description="Fibronectin type-III 3" evidence="3">
    <location>
        <begin position="469"/>
        <end position="559"/>
    </location>
</feature>
<feature type="domain" description="Fibronectin type-III 4" evidence="3">
    <location>
        <begin position="560"/>
        <end position="647"/>
    </location>
</feature>
<feature type="domain" description="Fibronectin type-III 5" evidence="3">
    <location>
        <begin position="649"/>
        <end position="738"/>
    </location>
</feature>
<feature type="domain" description="Fibronectin type-III 6" evidence="3">
    <location>
        <begin position="743"/>
        <end position="833"/>
    </location>
</feature>
<feature type="domain" description="Laminin G-like">
    <location>
        <begin position="842"/>
        <end position="1037"/>
    </location>
</feature>
<feature type="domain" description="Collagen-like 1">
    <location>
        <begin position="1071"/>
        <end position="1127"/>
    </location>
</feature>
<feature type="domain" description="Collagen-like 2">
    <location>
        <begin position="1133"/>
        <end position="1190"/>
    </location>
</feature>
<feature type="region of interest" description="Disordered" evidence="4">
    <location>
        <begin position="122"/>
        <end position="171"/>
    </location>
</feature>
<feature type="region of interest" description="Disordered" evidence="4">
    <location>
        <begin position="1065"/>
        <end position="1190"/>
    </location>
</feature>
<feature type="region of interest" description="Disordered" evidence="4">
    <location>
        <begin position="1212"/>
        <end position="1284"/>
    </location>
</feature>
<feature type="compositionally biased region" description="Pro residues" evidence="4">
    <location>
        <begin position="1071"/>
        <end position="1082"/>
    </location>
</feature>
<feature type="compositionally biased region" description="Low complexity" evidence="4">
    <location>
        <begin position="1112"/>
        <end position="1125"/>
    </location>
</feature>
<feature type="compositionally biased region" description="Low complexity" evidence="4">
    <location>
        <begin position="1166"/>
        <end position="1181"/>
    </location>
</feature>
<feature type="compositionally biased region" description="Polar residues" evidence="4">
    <location>
        <begin position="1271"/>
        <end position="1284"/>
    </location>
</feature>
<feature type="glycosylation site" description="N-linked (GlcNAc...) asparagine" evidence="1">
    <location>
        <position position="607"/>
    </location>
</feature>
<feature type="splice variant" id="VSP_038876" description="In isoform 2." evidence="5">
    <original>PA</original>
    <variation>PGGSEWRET</variation>
    <location>
        <begin position="165"/>
        <end position="166"/>
    </location>
</feature>
<feature type="splice variant" id="VSP_038877" description="In isoform 3." evidence="6">
    <original>R</original>
    <variation>RGEPGPPGQMGPEGPGGQQGSPGTQGRAVQGPV</variation>
    <location>
        <position position="1098"/>
    </location>
</feature>
<feature type="splice variant" id="VSP_038878" description="In isoform 2." evidence="5">
    <original>AS</original>
    <variation>ACESAIQT</variation>
    <location>
        <begin position="1204"/>
        <end position="1205"/>
    </location>
</feature>
<feature type="sequence variant" id="VAR_055671" description="In dbSNP:rs753686.">
    <original>P</original>
    <variation>L</variation>
    <location>
        <position position="134"/>
    </location>
</feature>
<feature type="sequence conflict" description="In Ref. 2; AAH43183." evidence="7" ref="2">
    <original>L</original>
    <variation>V</variation>
    <location>
        <position position="13"/>
    </location>
</feature>
<feature type="sequence conflict" description="In Ref. 2; AAH43183." evidence="7" ref="2">
    <original>P</original>
    <variation>H</variation>
    <location>
        <position position="78"/>
    </location>
</feature>
<feature type="sequence conflict" description="In Ref. 3; BAA96034." evidence="7" ref="3">
    <original>T</original>
    <variation>M</variation>
    <location>
        <position position="612"/>
    </location>
</feature>
<feature type="sequence conflict" description="In Ref. 2; AAH43183." evidence="7" ref="2">
    <original>E</original>
    <variation>K</variation>
    <location>
        <position position="924"/>
    </location>
</feature>
<feature type="sequence conflict" description="In Ref. 2; AAH43183." evidence="7" ref="2">
    <original>P</original>
    <variation>Q</variation>
    <location>
        <position position="1230"/>
    </location>
</feature>
<feature type="strand" evidence="11">
    <location>
        <begin position="374"/>
        <end position="377"/>
    </location>
</feature>
<feature type="strand" evidence="11">
    <location>
        <begin position="381"/>
        <end position="386"/>
    </location>
</feature>
<feature type="strand" evidence="11">
    <location>
        <begin position="393"/>
        <end position="398"/>
    </location>
</feature>
<feature type="strand" evidence="11">
    <location>
        <begin position="405"/>
        <end position="413"/>
    </location>
</feature>
<feature type="strand" evidence="11">
    <location>
        <begin position="420"/>
        <end position="425"/>
    </location>
</feature>
<feature type="strand" evidence="11">
    <location>
        <begin position="430"/>
        <end position="433"/>
    </location>
</feature>
<feature type="strand" evidence="11">
    <location>
        <begin position="441"/>
        <end position="450"/>
    </location>
</feature>
<feature type="strand" evidence="11">
    <location>
        <begin position="453"/>
        <end position="455"/>
    </location>
</feature>
<feature type="strand" evidence="11">
    <location>
        <begin position="458"/>
        <end position="463"/>
    </location>
</feature>
<feature type="strand" evidence="8">
    <location>
        <begin position="474"/>
        <end position="478"/>
    </location>
</feature>
<feature type="strand" evidence="8">
    <location>
        <begin position="480"/>
        <end position="486"/>
    </location>
</feature>
<feature type="strand" evidence="8">
    <location>
        <begin position="494"/>
        <end position="505"/>
    </location>
</feature>
<feature type="strand" evidence="8">
    <location>
        <begin position="512"/>
        <end position="525"/>
    </location>
</feature>
<feature type="strand" evidence="8">
    <location>
        <begin position="532"/>
        <end position="539"/>
    </location>
</feature>
<feature type="strand" evidence="8">
    <location>
        <begin position="541"/>
        <end position="544"/>
    </location>
</feature>
<feature type="strand" evidence="8">
    <location>
        <begin position="548"/>
        <end position="551"/>
    </location>
</feature>
<feature type="strand" evidence="9">
    <location>
        <begin position="563"/>
        <end position="567"/>
    </location>
</feature>
<feature type="strand" evidence="9">
    <location>
        <begin position="573"/>
        <end position="578"/>
    </location>
</feature>
<feature type="strand" evidence="9">
    <location>
        <begin position="585"/>
        <end position="593"/>
    </location>
</feature>
<feature type="turn" evidence="9">
    <location>
        <begin position="594"/>
        <end position="596"/>
    </location>
</feature>
<feature type="strand" evidence="9">
    <location>
        <begin position="602"/>
        <end position="605"/>
    </location>
</feature>
<feature type="strand" evidence="9">
    <location>
        <begin position="610"/>
        <end position="613"/>
    </location>
</feature>
<feature type="strand" evidence="9">
    <location>
        <begin position="621"/>
        <end position="629"/>
    </location>
</feature>
<feature type="strand" evidence="9">
    <location>
        <begin position="635"/>
        <end position="643"/>
    </location>
</feature>
<feature type="strand" evidence="10">
    <location>
        <begin position="745"/>
        <end position="753"/>
    </location>
</feature>
<feature type="strand" evidence="10">
    <location>
        <begin position="756"/>
        <end position="762"/>
    </location>
</feature>
<feature type="strand" evidence="10">
    <location>
        <begin position="769"/>
        <end position="771"/>
    </location>
</feature>
<feature type="strand" evidence="10">
    <location>
        <begin position="793"/>
        <end position="798"/>
    </location>
</feature>
<sequence length="1284" mass="135830">MSSGDPAHLGLCLWLWLGATLGREQVQASGLLRLAVLPEDRLQMKWRESEGSGLGYLVQVKPMAGDSEQEVILTTKTPKATVGGLSPSKGYTLQIFELTGSGRFLLARREFVIEDLKSSSLDRSSQRPLGSGAPEPTPSHTGSPDPEQASEPQVAFTPSQDPRTPAGPQFRCLPPVPADMVFLVDGSWSIGHSHFQQVKDFLASVIAPFEIGPDKVQVGLTQYSGDAQTEWDLNSLSTKEQVLAAVRRLRYKGGNTFTGLALTHVLGQNLQPAAGLRPEAAKVVILVTDGKSQDDVHTAARVLKDLGVNVFAVGVKNADEAELRLLASPPRDITVHSVLDFLQLGALAGLLSRLICQRLQGGSPRQGPAAAPALDTLPAPTSLVLSQVTSSSIRLSWTPAPRHPLKYLIVWRASRGGTPREVVVEGPAASTELHNLASRTEYLVSVFPIYEGGVGEGLRGLVTTAPLPPPRALTLAAVTPRTVHLTWQPSAGATHYLVRCSPASPKGEEEEREVQVGRPEVLLDGLEPGRDYEVSVQSLRGPEGSEARGIRARTPTLAPPRHLGFSDVSHDAARVFWEGAPRPVRLVRVTYVSSEGGHSGQTEAPGNATSATLGPLSSSTTYTVRVTCLYPGGGSSTLTGRVTTKKAPSPSQLSMTELPGDAVQLAWVAAAPSGVLVYQITWTPLGEGKAHEISVPGNLGTAVLPGLGRHTEYDVTILAYYRDGARSDPVSLRYTPSTVSRSPPSNLALASETPDSLQVSWTPPLGRVLHYWLTYAPASGLGPEKSVSVPGARSHVTLPDLQAATKYRVLVSAIYAAGRSEAVSATGQTACPALRPDGSLPGFDLMVAFSLVEKAYASIRGVAMEPSAFGGTPTFTLFKDAQLTRRVSDVYPAPLPPEHTIVFLVRLLPETPREAFALWQMTAEDFQPLLGVLLDAGKKSLTYFHRDPRAALQEATFDPQEVRKIFFGSFHKVHVAVGRSKVRLYVDCRKVAERPLGEMGSPPAAGFVTLGRLAKARGPRSSSAAFQLQMLQIVCSDTWADEDRCCELPASRDGETCPAFVSACSCSSETPGPPGPQGPPGLPGRNGTPGEQGFPGPRGPPGVKGEKGDHGLPGLQGHPGHQGIPGRVGLQGPKGMRGLEGTAGLPGPPGPRGFQGMAGARGTSGERGPPGTVGPTGLPGPKGERGEKGEPQSLATLYQLVSQASHVSKFDSFHENTRPPMPILEQKLEPGTEPLGSPGTRSKALVPGEWGRGGRHLEGRGEPGAVGQMGSPGQQGASTQGLWE</sequence>
<proteinExistence type="evidence at protein level"/>
<protein>
    <recommendedName>
        <fullName>Collagen alpha-1(XX) chain</fullName>
    </recommendedName>
</protein>
<gene>
    <name type="primary">COL20A1</name>
    <name type="synonym">KIAA1510</name>
</gene>
<keyword id="KW-0002">3D-structure</keyword>
<keyword id="KW-0025">Alternative splicing</keyword>
<keyword id="KW-0176">Collagen</keyword>
<keyword id="KW-0325">Glycoprotein</keyword>
<keyword id="KW-1267">Proteomics identification</keyword>
<keyword id="KW-1185">Reference proteome</keyword>
<keyword id="KW-0677">Repeat</keyword>
<keyword id="KW-0964">Secreted</keyword>
<keyword id="KW-0732">Signal</keyword>
<dbReference type="EMBL" id="AL121827">
    <property type="status" value="NOT_ANNOTATED_CDS"/>
    <property type="molecule type" value="Genomic_DNA"/>
</dbReference>
<dbReference type="EMBL" id="BC013658">
    <property type="protein sequence ID" value="AAH13658.1"/>
    <property type="molecule type" value="mRNA"/>
</dbReference>
<dbReference type="EMBL" id="BC019637">
    <property type="protein sequence ID" value="AAH19637.1"/>
    <property type="status" value="ALT_INIT"/>
    <property type="molecule type" value="mRNA"/>
</dbReference>
<dbReference type="EMBL" id="BC043183">
    <property type="protein sequence ID" value="AAH43183.1"/>
    <property type="molecule type" value="mRNA"/>
</dbReference>
<dbReference type="EMBL" id="AB040943">
    <property type="protein sequence ID" value="BAA96034.1"/>
    <property type="molecule type" value="mRNA"/>
</dbReference>
<dbReference type="EMBL" id="AI272270">
    <property type="status" value="NOT_ANNOTATED_CDS"/>
    <property type="molecule type" value="mRNA"/>
</dbReference>
<dbReference type="CCDS" id="CCDS46628.1">
    <molecule id="Q9P218-1"/>
</dbReference>
<dbReference type="RefSeq" id="NP_065933.2">
    <molecule id="Q9P218-1"/>
    <property type="nucleotide sequence ID" value="NM_020882.4"/>
</dbReference>
<dbReference type="RefSeq" id="XP_011527242.1">
    <property type="nucleotide sequence ID" value="XM_011528940.1"/>
</dbReference>
<dbReference type="PDB" id="2DKM">
    <property type="method" value="NMR"/>
    <property type="chains" value="A=466-556"/>
</dbReference>
<dbReference type="PDB" id="2EE3">
    <property type="method" value="NMR"/>
    <property type="chains" value="A=557-651"/>
</dbReference>
<dbReference type="PDB" id="2EKJ">
    <property type="method" value="NMR"/>
    <property type="chains" value="A=741-832"/>
</dbReference>
<dbReference type="PDB" id="5KF4">
    <property type="method" value="X-ray"/>
    <property type="resolution" value="2.50 A"/>
    <property type="chains" value="A/B/C/D=368-466"/>
</dbReference>
<dbReference type="PDBsum" id="2DKM"/>
<dbReference type="PDBsum" id="2EE3"/>
<dbReference type="PDBsum" id="2EKJ"/>
<dbReference type="PDBsum" id="5KF4"/>
<dbReference type="SMR" id="Q9P218"/>
<dbReference type="BioGRID" id="121679">
    <property type="interactions" value="42"/>
</dbReference>
<dbReference type="ComplexPortal" id="CPX-1761">
    <property type="entry name" value="Collagen type XX trimer"/>
</dbReference>
<dbReference type="FunCoup" id="Q9P218">
    <property type="interactions" value="182"/>
</dbReference>
<dbReference type="IntAct" id="Q9P218">
    <property type="interactions" value="24"/>
</dbReference>
<dbReference type="STRING" id="9606.ENSP00000351767"/>
<dbReference type="GlyCosmos" id="Q9P218">
    <property type="glycosylation" value="3 sites, 1 glycan"/>
</dbReference>
<dbReference type="GlyGen" id="Q9P218">
    <property type="glycosylation" value="5 sites, 1 O-linked glycan (2 sites)"/>
</dbReference>
<dbReference type="iPTMnet" id="Q9P218"/>
<dbReference type="PhosphoSitePlus" id="Q9P218"/>
<dbReference type="BioMuta" id="COL20A1"/>
<dbReference type="DMDM" id="292495087"/>
<dbReference type="jPOST" id="Q9P218"/>
<dbReference type="MassIVE" id="Q9P218"/>
<dbReference type="PaxDb" id="9606-ENSP00000351767"/>
<dbReference type="PeptideAtlas" id="Q9P218"/>
<dbReference type="ProteomicsDB" id="83709">
    <molecule id="Q9P218-1"/>
</dbReference>
<dbReference type="ProteomicsDB" id="83710">
    <molecule id="Q9P218-2"/>
</dbReference>
<dbReference type="ProteomicsDB" id="83711">
    <molecule id="Q9P218-3"/>
</dbReference>
<dbReference type="Antibodypedia" id="29690">
    <property type="antibodies" value="192 antibodies from 27 providers"/>
</dbReference>
<dbReference type="DNASU" id="57642"/>
<dbReference type="Ensembl" id="ENST00000358894.11">
    <molecule id="Q9P218-1"/>
    <property type="protein sequence ID" value="ENSP00000351767.6"/>
    <property type="gene ID" value="ENSG00000101203.17"/>
</dbReference>
<dbReference type="Ensembl" id="ENST00000422202.5">
    <molecule id="Q9P218-2"/>
    <property type="protein sequence ID" value="ENSP00000414753.1"/>
    <property type="gene ID" value="ENSG00000101203.17"/>
</dbReference>
<dbReference type="GeneID" id="57642"/>
<dbReference type="KEGG" id="hsa:57642"/>
<dbReference type="MANE-Select" id="ENST00000358894.11">
    <property type="protein sequence ID" value="ENSP00000351767.6"/>
    <property type="RefSeq nucleotide sequence ID" value="NM_020882.4"/>
    <property type="RefSeq protein sequence ID" value="NP_065933.2"/>
</dbReference>
<dbReference type="UCSC" id="uc011aau.2">
    <molecule id="Q9P218-1"/>
    <property type="organism name" value="human"/>
</dbReference>
<dbReference type="AGR" id="HGNC:14670"/>
<dbReference type="CTD" id="57642"/>
<dbReference type="DisGeNET" id="57642"/>
<dbReference type="GeneCards" id="COL20A1"/>
<dbReference type="HGNC" id="HGNC:14670">
    <property type="gene designation" value="COL20A1"/>
</dbReference>
<dbReference type="HPA" id="ENSG00000101203">
    <property type="expression patterns" value="Group enriched (brain, testis)"/>
</dbReference>
<dbReference type="MIM" id="619390">
    <property type="type" value="gene"/>
</dbReference>
<dbReference type="neXtProt" id="NX_Q9P218"/>
<dbReference type="OpenTargets" id="ENSG00000101203"/>
<dbReference type="PharmGKB" id="PA142672086"/>
<dbReference type="VEuPathDB" id="HostDB:ENSG00000101203"/>
<dbReference type="eggNOG" id="KOG3544">
    <property type="taxonomic scope" value="Eukaryota"/>
</dbReference>
<dbReference type="GeneTree" id="ENSGT00940000163709"/>
<dbReference type="HOGENOM" id="CLU_002527_0_0_1"/>
<dbReference type="InParanoid" id="Q9P218"/>
<dbReference type="OMA" id="DISGCYG"/>
<dbReference type="OrthoDB" id="10256829at2759"/>
<dbReference type="PAN-GO" id="Q9P218">
    <property type="GO annotations" value="2 GO annotations based on evolutionary models"/>
</dbReference>
<dbReference type="PhylomeDB" id="Q9P218"/>
<dbReference type="TreeFam" id="TF329914"/>
<dbReference type="PathwayCommons" id="Q9P218"/>
<dbReference type="Reactome" id="R-HSA-1650814">
    <property type="pathway name" value="Collagen biosynthesis and modifying enzymes"/>
</dbReference>
<dbReference type="Reactome" id="R-HSA-8948216">
    <property type="pathway name" value="Collagen chain trimerization"/>
</dbReference>
<dbReference type="SignaLink" id="Q9P218"/>
<dbReference type="BioGRID-ORCS" id="57642">
    <property type="hits" value="12 hits in 1138 CRISPR screens"/>
</dbReference>
<dbReference type="ChiTaRS" id="COL20A1">
    <property type="organism name" value="human"/>
</dbReference>
<dbReference type="EvolutionaryTrace" id="Q9P218"/>
<dbReference type="GenomeRNAi" id="57642"/>
<dbReference type="Pharos" id="Q9P218">
    <property type="development level" value="Tdark"/>
</dbReference>
<dbReference type="PRO" id="PR:Q9P218"/>
<dbReference type="Proteomes" id="UP000005640">
    <property type="component" value="Chromosome 20"/>
</dbReference>
<dbReference type="RNAct" id="Q9P218">
    <property type="molecule type" value="protein"/>
</dbReference>
<dbReference type="Bgee" id="ENSG00000101203">
    <property type="expression patterns" value="Expressed in right testis and 110 other cell types or tissues"/>
</dbReference>
<dbReference type="ExpressionAtlas" id="Q9P218">
    <property type="expression patterns" value="baseline and differential"/>
</dbReference>
<dbReference type="GO" id="GO:0005581">
    <property type="term" value="C:collagen trimer"/>
    <property type="evidence" value="ECO:0007669"/>
    <property type="project" value="UniProtKB-KW"/>
</dbReference>
<dbReference type="GO" id="GO:0005788">
    <property type="term" value="C:endoplasmic reticulum lumen"/>
    <property type="evidence" value="ECO:0000304"/>
    <property type="project" value="Reactome"/>
</dbReference>
<dbReference type="GO" id="GO:0005576">
    <property type="term" value="C:extracellular region"/>
    <property type="evidence" value="ECO:0000304"/>
    <property type="project" value="Reactome"/>
</dbReference>
<dbReference type="CDD" id="cd00063">
    <property type="entry name" value="FN3"/>
    <property type="match status" value="6"/>
</dbReference>
<dbReference type="CDD" id="cd01482">
    <property type="entry name" value="vWA_collagen_alphaI-XII-like"/>
    <property type="match status" value="1"/>
</dbReference>
<dbReference type="FunFam" id="2.60.40.10:FF:000974">
    <property type="entry name" value="Collagen alpha-1(XX) chain"/>
    <property type="match status" value="1"/>
</dbReference>
<dbReference type="FunFam" id="2.60.120.200:FF:000008">
    <property type="entry name" value="Collagen type XII alpha 1 chain"/>
    <property type="match status" value="1"/>
</dbReference>
<dbReference type="FunFam" id="2.60.40.10:FF:001587">
    <property type="entry name" value="Collagen type XX alpha 1 chain"/>
    <property type="match status" value="1"/>
</dbReference>
<dbReference type="FunFam" id="2.60.40.10:FF:000234">
    <property type="entry name" value="Collagen, type XII, alpha 1"/>
    <property type="match status" value="2"/>
</dbReference>
<dbReference type="FunFam" id="3.40.50.410:FF:000001">
    <property type="entry name" value="Collagen, type XII, alpha 1"/>
    <property type="match status" value="1"/>
</dbReference>
<dbReference type="FunFam" id="2.60.40.10:FF:000953">
    <property type="entry name" value="Collagen, type XX, alpha 1"/>
    <property type="match status" value="1"/>
</dbReference>
<dbReference type="FunFam" id="2.60.40.10:FF:000638">
    <property type="entry name" value="von Willebrand factor A domain-containing 1"/>
    <property type="match status" value="1"/>
</dbReference>
<dbReference type="Gene3D" id="2.60.120.200">
    <property type="match status" value="1"/>
</dbReference>
<dbReference type="Gene3D" id="2.60.40.10">
    <property type="entry name" value="Immunoglobulins"/>
    <property type="match status" value="6"/>
</dbReference>
<dbReference type="Gene3D" id="3.40.50.410">
    <property type="entry name" value="von Willebrand factor, type A domain"/>
    <property type="match status" value="1"/>
</dbReference>
<dbReference type="InterPro" id="IPR008160">
    <property type="entry name" value="Collagen"/>
</dbReference>
<dbReference type="InterPro" id="IPR013320">
    <property type="entry name" value="ConA-like_dom_sf"/>
</dbReference>
<dbReference type="InterPro" id="IPR050991">
    <property type="entry name" value="ECM_Regulatory_Proteins"/>
</dbReference>
<dbReference type="InterPro" id="IPR003961">
    <property type="entry name" value="FN3_dom"/>
</dbReference>
<dbReference type="InterPro" id="IPR036116">
    <property type="entry name" value="FN3_sf"/>
</dbReference>
<dbReference type="InterPro" id="IPR013783">
    <property type="entry name" value="Ig-like_fold"/>
</dbReference>
<dbReference type="InterPro" id="IPR048287">
    <property type="entry name" value="TSPN-like_N"/>
</dbReference>
<dbReference type="InterPro" id="IPR002035">
    <property type="entry name" value="VWF_A"/>
</dbReference>
<dbReference type="InterPro" id="IPR036465">
    <property type="entry name" value="vWFA_dom_sf"/>
</dbReference>
<dbReference type="PANTHER" id="PTHR46708:SF2">
    <property type="entry name" value="FIBRONECTIN TYPE-III DOMAIN-CONTAINING PROTEIN"/>
    <property type="match status" value="1"/>
</dbReference>
<dbReference type="PANTHER" id="PTHR46708">
    <property type="entry name" value="TENASCIN"/>
    <property type="match status" value="1"/>
</dbReference>
<dbReference type="Pfam" id="PF01391">
    <property type="entry name" value="Collagen"/>
    <property type="match status" value="2"/>
</dbReference>
<dbReference type="Pfam" id="PF00041">
    <property type="entry name" value="fn3"/>
    <property type="match status" value="5"/>
</dbReference>
<dbReference type="Pfam" id="PF00092">
    <property type="entry name" value="VWA"/>
    <property type="match status" value="1"/>
</dbReference>
<dbReference type="PRINTS" id="PR00453">
    <property type="entry name" value="VWFADOMAIN"/>
</dbReference>
<dbReference type="SMART" id="SM00060">
    <property type="entry name" value="FN3"/>
    <property type="match status" value="6"/>
</dbReference>
<dbReference type="SMART" id="SM00210">
    <property type="entry name" value="TSPN"/>
    <property type="match status" value="1"/>
</dbReference>
<dbReference type="SMART" id="SM00327">
    <property type="entry name" value="VWA"/>
    <property type="match status" value="1"/>
</dbReference>
<dbReference type="SUPFAM" id="SSF49899">
    <property type="entry name" value="Concanavalin A-like lectins/glucanases"/>
    <property type="match status" value="1"/>
</dbReference>
<dbReference type="SUPFAM" id="SSF49265">
    <property type="entry name" value="Fibronectin type III"/>
    <property type="match status" value="4"/>
</dbReference>
<dbReference type="SUPFAM" id="SSF53300">
    <property type="entry name" value="vWA-like"/>
    <property type="match status" value="1"/>
</dbReference>
<dbReference type="PROSITE" id="PS50853">
    <property type="entry name" value="FN3"/>
    <property type="match status" value="6"/>
</dbReference>
<dbReference type="PROSITE" id="PS50234">
    <property type="entry name" value="VWFA"/>
    <property type="match status" value="1"/>
</dbReference>
<comment type="function">
    <text>Probable collagen protein.</text>
</comment>
<comment type="interaction">
    <interactant intactId="EBI-10318410">
        <id>Q9P218-2</id>
    </interactant>
    <interactant intactId="EBI-10175124">
        <id>Q8IZU0</id>
        <label>FAM9B</label>
    </interactant>
    <organismsDiffer>false</organismsDiffer>
    <experiments>3</experiments>
</comment>
<comment type="interaction">
    <interactant intactId="EBI-10318410">
        <id>Q9P218-2</id>
    </interactant>
    <interactant intactId="EBI-307352">
        <id>Q04864</id>
        <label>REL</label>
    </interactant>
    <organismsDiffer>false</organismsDiffer>
    <experiments>3</experiments>
</comment>
<comment type="interaction">
    <interactant intactId="EBI-10318410">
        <id>Q9P218-2</id>
    </interactant>
    <interactant intactId="EBI-742397">
        <id>Q8IYF3</id>
        <label>TEX11</label>
    </interactant>
    <organismsDiffer>false</organismsDiffer>
    <experiments>3</experiments>
</comment>
<comment type="subcellular location">
    <subcellularLocation>
        <location evidence="7">Secreted</location>
        <location evidence="7">Extracellular space</location>
    </subcellularLocation>
</comment>
<comment type="alternative products">
    <event type="alternative splicing"/>
    <isoform>
        <id>Q9P218-1</id>
        <name>1</name>
        <sequence type="displayed"/>
    </isoform>
    <isoform>
        <id>Q9P218-2</id>
        <name>2</name>
        <sequence type="described" ref="VSP_038876 VSP_038878"/>
    </isoform>
    <isoform>
        <id>Q9P218-3</id>
        <name>3</name>
        <sequence type="described" ref="VSP_038877"/>
    </isoform>
</comment>
<comment type="tissue specificity">
    <text>High expression in heart, lung, liver, skeletal muscle, kidney, pancreas, spleen, testis, ovary, subthalamic nucleus and fetal liver. Weak expression in other tissues tested.</text>
</comment>
<comment type="sequence caution" evidence="7">
    <conflict type="erroneous initiation">
        <sequence resource="EMBL-CDS" id="AAH19637"/>
    </conflict>
    <text>Truncated N-terminus.</text>
</comment>
<name>COKA1_HUMAN</name>
<evidence type="ECO:0000255" key="1"/>
<evidence type="ECO:0000255" key="2">
    <source>
        <dbReference type="PROSITE-ProRule" id="PRU00219"/>
    </source>
</evidence>
<evidence type="ECO:0000255" key="3">
    <source>
        <dbReference type="PROSITE-ProRule" id="PRU00316"/>
    </source>
</evidence>
<evidence type="ECO:0000256" key="4">
    <source>
        <dbReference type="SAM" id="MobiDB-lite"/>
    </source>
</evidence>
<evidence type="ECO:0000303" key="5">
    <source>
    </source>
</evidence>
<evidence type="ECO:0000303" key="6">
    <source ref="4"/>
</evidence>
<evidence type="ECO:0000305" key="7"/>
<evidence type="ECO:0007829" key="8">
    <source>
        <dbReference type="PDB" id="2DKM"/>
    </source>
</evidence>
<evidence type="ECO:0007829" key="9">
    <source>
        <dbReference type="PDB" id="2EE3"/>
    </source>
</evidence>
<evidence type="ECO:0007829" key="10">
    <source>
        <dbReference type="PDB" id="2EKJ"/>
    </source>
</evidence>
<evidence type="ECO:0007829" key="11">
    <source>
        <dbReference type="PDB" id="5KF4"/>
    </source>
</evidence>
<organism>
    <name type="scientific">Homo sapiens</name>
    <name type="common">Human</name>
    <dbReference type="NCBI Taxonomy" id="9606"/>
    <lineage>
        <taxon>Eukaryota</taxon>
        <taxon>Metazoa</taxon>
        <taxon>Chordata</taxon>
        <taxon>Craniata</taxon>
        <taxon>Vertebrata</taxon>
        <taxon>Euteleostomi</taxon>
        <taxon>Mammalia</taxon>
        <taxon>Eutheria</taxon>
        <taxon>Euarchontoglires</taxon>
        <taxon>Primates</taxon>
        <taxon>Haplorrhini</taxon>
        <taxon>Catarrhini</taxon>
        <taxon>Hominidae</taxon>
        <taxon>Homo</taxon>
    </lineage>
</organism>
<accession>Q9P218</accession>
<accession>Q4VXQ4</accession>
<accession>Q6PI59</accession>
<accession>Q8WUT2</accession>
<accession>Q96CY9</accession>
<accession>Q9BQU6</accession>
<accession>Q9BQU7</accession>
<reference key="1">
    <citation type="journal article" date="2001" name="Nature">
        <title>The DNA sequence and comparative analysis of human chromosome 20.</title>
        <authorList>
            <person name="Deloukas P."/>
            <person name="Matthews L.H."/>
            <person name="Ashurst J.L."/>
            <person name="Burton J."/>
            <person name="Gilbert J.G.R."/>
            <person name="Jones M."/>
            <person name="Stavrides G."/>
            <person name="Almeida J.P."/>
            <person name="Babbage A.K."/>
            <person name="Bagguley C.L."/>
            <person name="Bailey J."/>
            <person name="Barlow K.F."/>
            <person name="Bates K.N."/>
            <person name="Beard L.M."/>
            <person name="Beare D.M."/>
            <person name="Beasley O.P."/>
            <person name="Bird C.P."/>
            <person name="Blakey S.E."/>
            <person name="Bridgeman A.M."/>
            <person name="Brown A.J."/>
            <person name="Buck D."/>
            <person name="Burrill W.D."/>
            <person name="Butler A.P."/>
            <person name="Carder C."/>
            <person name="Carter N.P."/>
            <person name="Chapman J.C."/>
            <person name="Clamp M."/>
            <person name="Clark G."/>
            <person name="Clark L.N."/>
            <person name="Clark S.Y."/>
            <person name="Clee C.M."/>
            <person name="Clegg S."/>
            <person name="Cobley V.E."/>
            <person name="Collier R.E."/>
            <person name="Connor R.E."/>
            <person name="Corby N.R."/>
            <person name="Coulson A."/>
            <person name="Coville G.J."/>
            <person name="Deadman R."/>
            <person name="Dhami P.D."/>
            <person name="Dunn M."/>
            <person name="Ellington A.G."/>
            <person name="Frankland J.A."/>
            <person name="Fraser A."/>
            <person name="French L."/>
            <person name="Garner P."/>
            <person name="Grafham D.V."/>
            <person name="Griffiths C."/>
            <person name="Griffiths M.N.D."/>
            <person name="Gwilliam R."/>
            <person name="Hall R.E."/>
            <person name="Hammond S."/>
            <person name="Harley J.L."/>
            <person name="Heath P.D."/>
            <person name="Ho S."/>
            <person name="Holden J.L."/>
            <person name="Howden P.J."/>
            <person name="Huckle E."/>
            <person name="Hunt A.R."/>
            <person name="Hunt S.E."/>
            <person name="Jekosch K."/>
            <person name="Johnson C.M."/>
            <person name="Johnson D."/>
            <person name="Kay M.P."/>
            <person name="Kimberley A.M."/>
            <person name="King A."/>
            <person name="Knights A."/>
            <person name="Laird G.K."/>
            <person name="Lawlor S."/>
            <person name="Lehvaeslaiho M.H."/>
            <person name="Leversha M.A."/>
            <person name="Lloyd C."/>
            <person name="Lloyd D.M."/>
            <person name="Lovell J.D."/>
            <person name="Marsh V.L."/>
            <person name="Martin S.L."/>
            <person name="McConnachie L.J."/>
            <person name="McLay K."/>
            <person name="McMurray A.A."/>
            <person name="Milne S.A."/>
            <person name="Mistry D."/>
            <person name="Moore M.J.F."/>
            <person name="Mullikin J.C."/>
            <person name="Nickerson T."/>
            <person name="Oliver K."/>
            <person name="Parker A."/>
            <person name="Patel R."/>
            <person name="Pearce T.A.V."/>
            <person name="Peck A.I."/>
            <person name="Phillimore B.J.C.T."/>
            <person name="Prathalingam S.R."/>
            <person name="Plumb R.W."/>
            <person name="Ramsay H."/>
            <person name="Rice C.M."/>
            <person name="Ross M.T."/>
            <person name="Scott C.E."/>
            <person name="Sehra H.K."/>
            <person name="Shownkeen R."/>
            <person name="Sims S."/>
            <person name="Skuce C.D."/>
            <person name="Smith M.L."/>
            <person name="Soderlund C."/>
            <person name="Steward C.A."/>
            <person name="Sulston J.E."/>
            <person name="Swann R.M."/>
            <person name="Sycamore N."/>
            <person name="Taylor R."/>
            <person name="Tee L."/>
            <person name="Thomas D.W."/>
            <person name="Thorpe A."/>
            <person name="Tracey A."/>
            <person name="Tromans A.C."/>
            <person name="Vaudin M."/>
            <person name="Wall M."/>
            <person name="Wallis J.M."/>
            <person name="Whitehead S.L."/>
            <person name="Whittaker P."/>
            <person name="Willey D.L."/>
            <person name="Williams L."/>
            <person name="Williams S.A."/>
            <person name="Wilming L."/>
            <person name="Wray P.W."/>
            <person name="Hubbard T."/>
            <person name="Durbin R.M."/>
            <person name="Bentley D.R."/>
            <person name="Beck S."/>
            <person name="Rogers J."/>
        </authorList>
    </citation>
    <scope>NUCLEOTIDE SEQUENCE [LARGE SCALE GENOMIC DNA]</scope>
</reference>
<reference key="2">
    <citation type="journal article" date="2004" name="Genome Res.">
        <title>The status, quality, and expansion of the NIH full-length cDNA project: the Mammalian Gene Collection (MGC).</title>
        <authorList>
            <consortium name="The MGC Project Team"/>
        </authorList>
    </citation>
    <scope>NUCLEOTIDE SEQUENCE [LARGE SCALE MRNA] (ISOFORM 1)</scope>
    <scope>NUCLEOTIDE SEQUENCE [LARGE SCALE MRNA] OF 1013-1284 (ISOFORMS 2/3)</scope>
    <source>
        <tissue>Brain</tissue>
    </source>
</reference>
<reference key="3">
    <citation type="journal article" date="2000" name="DNA Res.">
        <title>Prediction of the coding sequences of unidentified human genes. XVII. The complete sequences of 100 new cDNA clones from brain which code for large proteins in vitro.</title>
        <authorList>
            <person name="Nagase T."/>
            <person name="Kikuno R."/>
            <person name="Ishikawa K."/>
            <person name="Hirosawa M."/>
            <person name="Ohara O."/>
        </authorList>
    </citation>
    <scope>NUCLEOTIDE SEQUENCE [LARGE SCALE MRNA] OF 158-1284 (ISOFORM 2)</scope>
    <source>
        <tissue>Brain</tissue>
    </source>
</reference>
<reference key="4">
    <citation type="submission" date="2002-06" db="EMBL/GenBank/DDBJ databases">
        <title>WashU-NCI human EST project.</title>
        <authorList>
            <person name="Hillier L."/>
            <person name="Allen M."/>
            <person name="Bowles L."/>
            <person name="Dubuque T."/>
            <person name="Geisel G."/>
            <person name="Jost S."/>
            <person name="Krizman D."/>
            <person name="Kucaba T."/>
            <person name="Lacy M."/>
            <person name="Le N."/>
            <person name="Lennon G."/>
            <person name="Marra M."/>
            <person name="Martin J."/>
            <person name="Moore B."/>
            <person name="Schellenberg K."/>
            <person name="Steptoe M."/>
            <person name="Tan F."/>
            <person name="Theising B."/>
            <person name="White Y."/>
            <person name="Wylie T."/>
            <person name="Waterston R."/>
            <person name="Wilson R."/>
        </authorList>
    </citation>
    <scope>NUCLEOTIDE SEQUENCE [MRNA] OF 1053-1160 (ISOFORM 3)</scope>
</reference>
<reference key="5">
    <citation type="submission" date="2006-10" db="PDB data bank">
        <title>Solution structures of the FN3 domains of human collagen alpha-1(xx) chain.</title>
        <authorList>
            <consortium name="RIKEN structural genomics initiative (RSGI)"/>
        </authorList>
    </citation>
    <scope>STRUCTURE BY NMR OF 466-554</scope>
</reference>